<organism>
    <name type="scientific">Arabidopsis thaliana</name>
    <name type="common">Mouse-ear cress</name>
    <dbReference type="NCBI Taxonomy" id="3702"/>
    <lineage>
        <taxon>Eukaryota</taxon>
        <taxon>Viridiplantae</taxon>
        <taxon>Streptophyta</taxon>
        <taxon>Embryophyta</taxon>
        <taxon>Tracheophyta</taxon>
        <taxon>Spermatophyta</taxon>
        <taxon>Magnoliopsida</taxon>
        <taxon>eudicotyledons</taxon>
        <taxon>Gunneridae</taxon>
        <taxon>Pentapetalae</taxon>
        <taxon>rosids</taxon>
        <taxon>malvids</taxon>
        <taxon>Brassicales</taxon>
        <taxon>Brassicaceae</taxon>
        <taxon>Camelineae</taxon>
        <taxon>Arabidopsis</taxon>
    </lineage>
</organism>
<name>UXT2_ARATH</name>
<gene>
    <name evidence="8" type="primary">UXT2</name>
    <name evidence="6" type="ordered locus">At2g30460</name>
    <name evidence="7" type="ORF">T6B20.18</name>
</gene>
<keyword id="KW-0050">Antiport</keyword>
<keyword id="KW-0333">Golgi apparatus</keyword>
<keyword id="KW-0472">Membrane</keyword>
<keyword id="KW-0597">Phosphoprotein</keyword>
<keyword id="KW-1185">Reference proteome</keyword>
<keyword id="KW-0762">Sugar transport</keyword>
<keyword id="KW-0812">Transmembrane</keyword>
<keyword id="KW-1133">Transmembrane helix</keyword>
<keyword id="KW-0813">Transport</keyword>
<dbReference type="EMBL" id="KP872767">
    <property type="protein sequence ID" value="AKA88213.1"/>
    <property type="molecule type" value="mRNA"/>
</dbReference>
<dbReference type="EMBL" id="U93215">
    <property type="protein sequence ID" value="AAB63090.1"/>
    <property type="status" value="ALT_SEQ"/>
    <property type="molecule type" value="Genomic_DNA"/>
</dbReference>
<dbReference type="EMBL" id="CP002685">
    <property type="protein sequence ID" value="AEC08390.1"/>
    <property type="molecule type" value="Genomic_DNA"/>
</dbReference>
<dbReference type="EMBL" id="CP002685">
    <property type="protein sequence ID" value="AEC08391.1"/>
    <property type="molecule type" value="Genomic_DNA"/>
</dbReference>
<dbReference type="EMBL" id="BT002471">
    <property type="protein sequence ID" value="AAO00831.1"/>
    <property type="molecule type" value="mRNA"/>
</dbReference>
<dbReference type="EMBL" id="BT008742">
    <property type="protein sequence ID" value="AAP42755.1"/>
    <property type="molecule type" value="mRNA"/>
</dbReference>
<dbReference type="EMBL" id="AK176166">
    <property type="protein sequence ID" value="BAD43929.1"/>
    <property type="molecule type" value="mRNA"/>
</dbReference>
<dbReference type="EMBL" id="AK176178">
    <property type="protein sequence ID" value="BAD43941.1"/>
    <property type="molecule type" value="mRNA"/>
</dbReference>
<dbReference type="EMBL" id="AK176274">
    <property type="protein sequence ID" value="BAD44037.1"/>
    <property type="molecule type" value="mRNA"/>
</dbReference>
<dbReference type="EMBL" id="AK221221">
    <property type="protein sequence ID" value="BAD93797.1"/>
    <property type="molecule type" value="mRNA"/>
</dbReference>
<dbReference type="PIR" id="F84708">
    <property type="entry name" value="F84708"/>
</dbReference>
<dbReference type="RefSeq" id="NP_001154542.1">
    <property type="nucleotide sequence ID" value="NM_001161070.2"/>
</dbReference>
<dbReference type="RefSeq" id="NP_180604.4">
    <property type="nucleotide sequence ID" value="NM_128598.5"/>
</dbReference>
<dbReference type="SMR" id="Q8GUJ1"/>
<dbReference type="FunCoup" id="Q8GUJ1">
    <property type="interactions" value="2608"/>
</dbReference>
<dbReference type="STRING" id="3702.Q8GUJ1"/>
<dbReference type="PaxDb" id="3702-AT2G30460.2"/>
<dbReference type="EnsemblPlants" id="AT2G30460.1">
    <property type="protein sequence ID" value="AT2G30460.1"/>
    <property type="gene ID" value="AT2G30460"/>
</dbReference>
<dbReference type="EnsemblPlants" id="AT2G30460.2">
    <property type="protein sequence ID" value="AT2G30460.2"/>
    <property type="gene ID" value="AT2G30460"/>
</dbReference>
<dbReference type="GeneID" id="817596"/>
<dbReference type="Gramene" id="AT2G30460.1">
    <property type="protein sequence ID" value="AT2G30460.1"/>
    <property type="gene ID" value="AT2G30460"/>
</dbReference>
<dbReference type="Gramene" id="AT2G30460.2">
    <property type="protein sequence ID" value="AT2G30460.2"/>
    <property type="gene ID" value="AT2G30460"/>
</dbReference>
<dbReference type="KEGG" id="ath:AT2G30460"/>
<dbReference type="Araport" id="AT2G30460"/>
<dbReference type="TAIR" id="AT2G30460">
    <property type="gene designation" value="UXT2"/>
</dbReference>
<dbReference type="eggNOG" id="KOG1441">
    <property type="taxonomic scope" value="Eukaryota"/>
</dbReference>
<dbReference type="HOGENOM" id="CLU_048347_0_1_1"/>
<dbReference type="InParanoid" id="Q8GUJ1"/>
<dbReference type="OMA" id="CKEYELN"/>
<dbReference type="OrthoDB" id="5547497at2759"/>
<dbReference type="PhylomeDB" id="Q8GUJ1"/>
<dbReference type="PRO" id="PR:Q8GUJ1"/>
<dbReference type="Proteomes" id="UP000006548">
    <property type="component" value="Chromosome 2"/>
</dbReference>
<dbReference type="ExpressionAtlas" id="Q8GUJ1">
    <property type="expression patterns" value="baseline and differential"/>
</dbReference>
<dbReference type="GO" id="GO:0005794">
    <property type="term" value="C:Golgi apparatus"/>
    <property type="evidence" value="ECO:0000314"/>
    <property type="project" value="TAIR"/>
</dbReference>
<dbReference type="GO" id="GO:0000139">
    <property type="term" value="C:Golgi membrane"/>
    <property type="evidence" value="ECO:0007669"/>
    <property type="project" value="UniProtKB-SubCell"/>
</dbReference>
<dbReference type="GO" id="GO:0015297">
    <property type="term" value="F:antiporter activity"/>
    <property type="evidence" value="ECO:0000314"/>
    <property type="project" value="UniProtKB"/>
</dbReference>
<dbReference type="GO" id="GO:0005464">
    <property type="term" value="F:UDP-xylose transmembrane transporter activity"/>
    <property type="evidence" value="ECO:0000314"/>
    <property type="project" value="TAIR"/>
</dbReference>
<dbReference type="GO" id="GO:0015790">
    <property type="term" value="P:UDP-xylose transmembrane transport"/>
    <property type="evidence" value="ECO:0000314"/>
    <property type="project" value="TAIR"/>
</dbReference>
<dbReference type="InterPro" id="IPR004853">
    <property type="entry name" value="Sugar_P_trans_dom"/>
</dbReference>
<dbReference type="InterPro" id="IPR050186">
    <property type="entry name" value="TPT_transporter"/>
</dbReference>
<dbReference type="PANTHER" id="PTHR11132">
    <property type="entry name" value="SOLUTE CARRIER FAMILY 35"/>
    <property type="match status" value="1"/>
</dbReference>
<dbReference type="Pfam" id="PF03151">
    <property type="entry name" value="TPT"/>
    <property type="match status" value="1"/>
</dbReference>
<dbReference type="SUPFAM" id="SSF103481">
    <property type="entry name" value="Multidrug resistance efflux transporter EmrE"/>
    <property type="match status" value="2"/>
</dbReference>
<accession>Q8GUJ1</accession>
<accession>O04347</accession>
<proteinExistence type="evidence at protein level"/>
<protein>
    <recommendedName>
        <fullName evidence="8">UDP-xylose transporter 2</fullName>
    </recommendedName>
</protein>
<evidence type="ECO:0000250" key="1">
    <source>
        <dbReference type="UniProtKB" id="Q9FDZ5"/>
    </source>
</evidence>
<evidence type="ECO:0000255" key="2"/>
<evidence type="ECO:0000256" key="3">
    <source>
        <dbReference type="SAM" id="MobiDB-lite"/>
    </source>
</evidence>
<evidence type="ECO:0000269" key="4">
    <source>
    </source>
</evidence>
<evidence type="ECO:0000305" key="5"/>
<evidence type="ECO:0000312" key="6">
    <source>
        <dbReference type="Araport" id="AT2G30460"/>
    </source>
</evidence>
<evidence type="ECO:0000312" key="7">
    <source>
        <dbReference type="EMBL" id="AAB63090.1"/>
    </source>
</evidence>
<evidence type="ECO:0000312" key="8">
    <source>
        <dbReference type="EMBL" id="AKA88213.1"/>
    </source>
</evidence>
<comment type="function">
    <text evidence="4">Nucleotide-sugar transporter that transports UDP-xylose and UMP in a strict counter-exchange mode.</text>
</comment>
<comment type="biophysicochemical properties">
    <kinetics>
        <KM evidence="4">40 uM for UDP-Xylose</KM>
        <Vmax evidence="4">13.0 nmol/sec/mg enzyme toward UDP-Xylose</Vmax>
    </kinetics>
</comment>
<comment type="subcellular location">
    <subcellularLocation>
        <location evidence="4">Golgi apparatus membrane</location>
        <topology evidence="2">Multi-pass membrane protein</topology>
    </subcellularLocation>
</comment>
<comment type="tissue specificity">
    <text evidence="4">Ubiquitous.</text>
</comment>
<comment type="similarity">
    <text evidence="5">Belongs to the TPT transporter family. TPT (TC 2.A.7.9) subfamily.</text>
</comment>
<comment type="sequence caution" evidence="5">
    <conflict type="erroneous gene model prediction">
        <sequence resource="EMBL-CDS" id="AAB63090"/>
    </conflict>
</comment>
<feature type="chain" id="PRO_0000439526" description="UDP-xylose transporter 2">
    <location>
        <begin position="1"/>
        <end position="353"/>
    </location>
</feature>
<feature type="transmembrane region" description="Helical" evidence="2">
    <location>
        <begin position="7"/>
        <end position="27"/>
    </location>
</feature>
<feature type="transmembrane region" description="Helical" evidence="2">
    <location>
        <begin position="31"/>
        <end position="51"/>
    </location>
</feature>
<feature type="transmembrane region" description="Helical" evidence="2">
    <location>
        <begin position="75"/>
        <end position="95"/>
    </location>
</feature>
<feature type="transmembrane region" description="Helical" evidence="2">
    <location>
        <begin position="100"/>
        <end position="120"/>
    </location>
</feature>
<feature type="transmembrane region" description="Helical" evidence="2">
    <location>
        <begin position="132"/>
        <end position="152"/>
    </location>
</feature>
<feature type="transmembrane region" description="Helical" evidence="2">
    <location>
        <begin position="154"/>
        <end position="174"/>
    </location>
</feature>
<feature type="transmembrane region" description="Helical" evidence="2">
    <location>
        <begin position="194"/>
        <end position="214"/>
    </location>
</feature>
<feature type="transmembrane region" description="Helical" evidence="2">
    <location>
        <begin position="224"/>
        <end position="244"/>
    </location>
</feature>
<feature type="transmembrane region" description="Helical" evidence="2">
    <location>
        <begin position="250"/>
        <end position="270"/>
    </location>
</feature>
<feature type="transmembrane region" description="Helical" evidence="2">
    <location>
        <begin position="280"/>
        <end position="300"/>
    </location>
</feature>
<feature type="region of interest" description="Disordered" evidence="3">
    <location>
        <begin position="308"/>
        <end position="353"/>
    </location>
</feature>
<feature type="compositionally biased region" description="Polar residues" evidence="3">
    <location>
        <begin position="327"/>
        <end position="353"/>
    </location>
</feature>
<feature type="modified residue" description="Phosphoserine" evidence="1">
    <location>
        <position position="334"/>
    </location>
</feature>
<reference key="1">
    <citation type="journal article" date="2015" name="Plant Cell">
        <title>Identification and characterization of a Golgi-localized UDP-xylose transporter family from Arabidopsis.</title>
        <authorList>
            <person name="Ebert B."/>
            <person name="Rautengarten C."/>
            <person name="Guo X."/>
            <person name="Xiong G."/>
            <person name="Stonebloom S."/>
            <person name="Smith-Moritz A.M."/>
            <person name="Herter T."/>
            <person name="Chan L.J."/>
            <person name="Adams P.D."/>
            <person name="Petzold C.J."/>
            <person name="Pauly M."/>
            <person name="Willats W.G."/>
            <person name="Heazlewood J.L."/>
            <person name="Scheller H.V."/>
        </authorList>
    </citation>
    <scope>NUCLEOTIDE SEQUENCE [MRNA]</scope>
    <scope>GENE FAMILY</scope>
    <scope>NOMENCLATURE</scope>
    <scope>TISSUE SPECIFICITY</scope>
    <scope>SUBCELLULAR LOCATION</scope>
    <scope>FUNCTION</scope>
    <scope>BIOPHYSICOCHEMICAL PROPERTIES</scope>
    <source>
        <strain>cv. Columbia</strain>
    </source>
</reference>
<reference key="2">
    <citation type="journal article" date="1999" name="Nature">
        <title>Sequence and analysis of chromosome 2 of the plant Arabidopsis thaliana.</title>
        <authorList>
            <person name="Lin X."/>
            <person name="Kaul S."/>
            <person name="Rounsley S.D."/>
            <person name="Shea T.P."/>
            <person name="Benito M.-I."/>
            <person name="Town C.D."/>
            <person name="Fujii C.Y."/>
            <person name="Mason T.M."/>
            <person name="Bowman C.L."/>
            <person name="Barnstead M.E."/>
            <person name="Feldblyum T.V."/>
            <person name="Buell C.R."/>
            <person name="Ketchum K.A."/>
            <person name="Lee J.J."/>
            <person name="Ronning C.M."/>
            <person name="Koo H.L."/>
            <person name="Moffat K.S."/>
            <person name="Cronin L.A."/>
            <person name="Shen M."/>
            <person name="Pai G."/>
            <person name="Van Aken S."/>
            <person name="Umayam L."/>
            <person name="Tallon L.J."/>
            <person name="Gill J.E."/>
            <person name="Adams M.D."/>
            <person name="Carrera A.J."/>
            <person name="Creasy T.H."/>
            <person name="Goodman H.M."/>
            <person name="Somerville C.R."/>
            <person name="Copenhaver G.P."/>
            <person name="Preuss D."/>
            <person name="Nierman W.C."/>
            <person name="White O."/>
            <person name="Eisen J.A."/>
            <person name="Salzberg S.L."/>
            <person name="Fraser C.M."/>
            <person name="Venter J.C."/>
        </authorList>
    </citation>
    <scope>NUCLEOTIDE SEQUENCE [LARGE SCALE GENOMIC DNA]</scope>
    <source>
        <strain>cv. Columbia</strain>
    </source>
</reference>
<reference key="3">
    <citation type="journal article" date="2017" name="Plant J.">
        <title>Araport11: a complete reannotation of the Arabidopsis thaliana reference genome.</title>
        <authorList>
            <person name="Cheng C.Y."/>
            <person name="Krishnakumar V."/>
            <person name="Chan A.P."/>
            <person name="Thibaud-Nissen F."/>
            <person name="Schobel S."/>
            <person name="Town C.D."/>
        </authorList>
    </citation>
    <scope>GENOME REANNOTATION</scope>
    <source>
        <strain>cv. Columbia</strain>
    </source>
</reference>
<reference key="4">
    <citation type="journal article" date="2003" name="Science">
        <title>Empirical analysis of transcriptional activity in the Arabidopsis genome.</title>
        <authorList>
            <person name="Yamada K."/>
            <person name="Lim J."/>
            <person name="Dale J.M."/>
            <person name="Chen H."/>
            <person name="Shinn P."/>
            <person name="Palm C.J."/>
            <person name="Southwick A.M."/>
            <person name="Wu H.C."/>
            <person name="Kim C.J."/>
            <person name="Nguyen M."/>
            <person name="Pham P.K."/>
            <person name="Cheuk R.F."/>
            <person name="Karlin-Newmann G."/>
            <person name="Liu S.X."/>
            <person name="Lam B."/>
            <person name="Sakano H."/>
            <person name="Wu T."/>
            <person name="Yu G."/>
            <person name="Miranda M."/>
            <person name="Quach H.L."/>
            <person name="Tripp M."/>
            <person name="Chang C.H."/>
            <person name="Lee J.M."/>
            <person name="Toriumi M.J."/>
            <person name="Chan M.M."/>
            <person name="Tang C.C."/>
            <person name="Onodera C.S."/>
            <person name="Deng J.M."/>
            <person name="Akiyama K."/>
            <person name="Ansari Y."/>
            <person name="Arakawa T."/>
            <person name="Banh J."/>
            <person name="Banno F."/>
            <person name="Bowser L."/>
            <person name="Brooks S.Y."/>
            <person name="Carninci P."/>
            <person name="Chao Q."/>
            <person name="Choy N."/>
            <person name="Enju A."/>
            <person name="Goldsmith A.D."/>
            <person name="Gurjal M."/>
            <person name="Hansen N.F."/>
            <person name="Hayashizaki Y."/>
            <person name="Johnson-Hopson C."/>
            <person name="Hsuan V.W."/>
            <person name="Iida K."/>
            <person name="Karnes M."/>
            <person name="Khan S."/>
            <person name="Koesema E."/>
            <person name="Ishida J."/>
            <person name="Jiang P.X."/>
            <person name="Jones T."/>
            <person name="Kawai J."/>
            <person name="Kamiya A."/>
            <person name="Meyers C."/>
            <person name="Nakajima M."/>
            <person name="Narusaka M."/>
            <person name="Seki M."/>
            <person name="Sakurai T."/>
            <person name="Satou M."/>
            <person name="Tamse R."/>
            <person name="Vaysberg M."/>
            <person name="Wallender E.K."/>
            <person name="Wong C."/>
            <person name="Yamamura Y."/>
            <person name="Yuan S."/>
            <person name="Shinozaki K."/>
            <person name="Davis R.W."/>
            <person name="Theologis A."/>
            <person name="Ecker J.R."/>
        </authorList>
    </citation>
    <scope>NUCLEOTIDE SEQUENCE [LARGE SCALE MRNA]</scope>
    <source>
        <strain>cv. Columbia</strain>
    </source>
</reference>
<reference key="5">
    <citation type="submission" date="2005-03" db="EMBL/GenBank/DDBJ databases">
        <title>Large-scale analysis of RIKEN Arabidopsis full-length (RAFL) cDNAs.</title>
        <authorList>
            <person name="Totoki Y."/>
            <person name="Seki M."/>
            <person name="Ishida J."/>
            <person name="Nakajima M."/>
            <person name="Enju A."/>
            <person name="Kamiya A."/>
            <person name="Narusaka M."/>
            <person name="Shin-i T."/>
            <person name="Nakagawa M."/>
            <person name="Sakamoto N."/>
            <person name="Oishi K."/>
            <person name="Kohara Y."/>
            <person name="Kobayashi M."/>
            <person name="Toyoda A."/>
            <person name="Sakaki Y."/>
            <person name="Sakurai T."/>
            <person name="Iida K."/>
            <person name="Akiyama K."/>
            <person name="Satou M."/>
            <person name="Toyoda T."/>
            <person name="Konagaya A."/>
            <person name="Carninci P."/>
            <person name="Kawai J."/>
            <person name="Hayashizaki Y."/>
            <person name="Shinozaki K."/>
        </authorList>
    </citation>
    <scope>NUCLEOTIDE SEQUENCE [LARGE SCALE MRNA]</scope>
    <source>
        <strain>cv. Columbia</strain>
    </source>
</reference>
<reference key="6">
    <citation type="journal article" date="2014" name="Proc. Natl. Acad. Sci. U.S.A.">
        <title>The Golgi localized bifunctional UDP-rhamnose/UDP-galactose transporter family of Arabidopsis.</title>
        <authorList>
            <person name="Rautengarten C."/>
            <person name="Ebert B."/>
            <person name="Moreno I."/>
            <person name="Temple H."/>
            <person name="Herter T."/>
            <person name="Link B."/>
            <person name="Donas-Cofre D."/>
            <person name="Moreno A."/>
            <person name="Saez-Aguayo S."/>
            <person name="Blanco F."/>
            <person name="Mortimer J.C."/>
            <person name="Schultink A."/>
            <person name="Reiter W.D."/>
            <person name="Dupree P."/>
            <person name="Pauly M."/>
            <person name="Heazlewood J.L."/>
            <person name="Scheller H.V."/>
            <person name="Orellana A."/>
        </authorList>
    </citation>
    <scope>GENE FAMILY</scope>
</reference>
<sequence>MSDAQKFQLGTIGALSLSVVSSVSIVICNKALISTLGFTFATTLTSWHLLVTFCSLHVALWMKFFEHKPFDPRAVLGFGVLNGISIGLLNLSLGFNSVGFYQMTKLAIIPCTVVLETIFFRKMFSRKIQFSLVILLLGVGIATVTDLQLNMLGSVLSLLAVITTCVAQIMTNTIQKKYKVSSTQLLYQSCPYQAITLFVTGPFLDGLLTNQNVFAFKYTSQVVFFIVLSCLISVSVNFSTFLVIGKTSPVTYQVLGHLKTCLVLAFGYLLLKDAFSWRNILGILVAVIGMVLYSYYCTLETQQKATETSTQLPQMDENEKDPLVSAENGSGLISDNGVQKQDPVWNSNKDFQA</sequence>